<name>HRI1_YEASO</name>
<proteinExistence type="inferred from homology"/>
<dbReference type="EMBL" id="AEEZ01000069">
    <property type="protein sequence ID" value="EGA61207.1"/>
    <property type="molecule type" value="Genomic_DNA"/>
</dbReference>
<dbReference type="SMR" id="E7NKW8"/>
<dbReference type="HOGENOM" id="CLU_097607_0_0_1"/>
<dbReference type="OMA" id="GEVNTTW"/>
<dbReference type="GO" id="GO:0005737">
    <property type="term" value="C:cytoplasm"/>
    <property type="evidence" value="ECO:0007669"/>
    <property type="project" value="UniProtKB-SubCell"/>
</dbReference>
<dbReference type="GO" id="GO:0005634">
    <property type="term" value="C:nucleus"/>
    <property type="evidence" value="ECO:0007669"/>
    <property type="project" value="UniProtKB-SubCell"/>
</dbReference>
<dbReference type="CDD" id="cd11693">
    <property type="entry name" value="HRI1_C_like"/>
    <property type="match status" value="1"/>
</dbReference>
<dbReference type="CDD" id="cd11692">
    <property type="entry name" value="HRI1_N_like"/>
    <property type="match status" value="1"/>
</dbReference>
<dbReference type="Gene3D" id="2.40.128.310">
    <property type="entry name" value="Protein HRI1, C-terminal domain"/>
    <property type="match status" value="1"/>
</dbReference>
<dbReference type="Gene3D" id="2.40.128.320">
    <property type="entry name" value="Protein HRI1, N-terminal domain"/>
    <property type="match status" value="1"/>
</dbReference>
<dbReference type="InterPro" id="IPR031818">
    <property type="entry name" value="Hri1"/>
</dbReference>
<dbReference type="InterPro" id="IPR038744">
    <property type="entry name" value="Hri1_N"/>
</dbReference>
<dbReference type="InterPro" id="IPR043047">
    <property type="entry name" value="Hri1_N_sf"/>
</dbReference>
<dbReference type="Pfam" id="PF16815">
    <property type="entry name" value="HRI1"/>
    <property type="match status" value="1"/>
</dbReference>
<organism>
    <name type="scientific">Saccharomyces cerevisiae (strain FostersO)</name>
    <name type="common">Baker's yeast</name>
    <dbReference type="NCBI Taxonomy" id="764101"/>
    <lineage>
        <taxon>Eukaryota</taxon>
        <taxon>Fungi</taxon>
        <taxon>Dikarya</taxon>
        <taxon>Ascomycota</taxon>
        <taxon>Saccharomycotina</taxon>
        <taxon>Saccharomycetes</taxon>
        <taxon>Saccharomycetales</taxon>
        <taxon>Saccharomycetaceae</taxon>
        <taxon>Saccharomyces</taxon>
    </lineage>
</organism>
<evidence type="ECO:0000250" key="1"/>
<evidence type="ECO:0000250" key="2">
    <source>
        <dbReference type="UniProtKB" id="Q05905"/>
    </source>
</evidence>
<evidence type="ECO:0000305" key="3"/>
<comment type="subunit">
    <text evidence="1">Interacts with HRR25. May interact with SEC72.</text>
</comment>
<comment type="subcellular location">
    <subcellularLocation>
        <location evidence="1">Cytoplasm</location>
    </subcellularLocation>
    <subcellularLocation>
        <location evidence="1">Nucleus</location>
    </subcellularLocation>
</comment>
<comment type="similarity">
    <text evidence="3">Belongs to the HRI1 family.</text>
</comment>
<reference key="1">
    <citation type="journal article" date="2011" name="PLoS Genet.">
        <title>Whole-genome comparison reveals novel genetic elements that characterize the genome of industrial strains of Saccharomyces cerevisiae.</title>
        <authorList>
            <person name="Borneman A.R."/>
            <person name="Desany B.A."/>
            <person name="Riches D."/>
            <person name="Affourtit J.P."/>
            <person name="Forgan A.H."/>
            <person name="Pretorius I.S."/>
            <person name="Egholm M."/>
            <person name="Chambers P.J."/>
        </authorList>
    </citation>
    <scope>NUCLEOTIDE SEQUENCE [LARGE SCALE GENOMIC DNA]</scope>
    <source>
        <strain>FostersO</strain>
    </source>
</reference>
<feature type="chain" id="PRO_0000410820" description="Protein HRI1">
    <location>
        <begin position="1"/>
        <end position="244"/>
    </location>
</feature>
<feature type="modified residue" description="Phosphoserine" evidence="2">
    <location>
        <position position="143"/>
    </location>
</feature>
<accession>E7NKW8</accession>
<sequence length="244" mass="27529">MPALLKRLLFQVGPHPNERTFTLSSVSTDGHYISLRPFVKPSGDELSFPFEWAFAGTNETVKVNDQGNGVVTQDFNFWLDTNVYLNVPNTHRGEVNTTWKNWDSGCVEETGAVYPFGADKESVSFRELWQPVDPSREDLVIVSPNNEKFSSNARSIVLKVTDEAYDGLVIVIGRWIQGFLSQKNNNTIEGLNFIRLLEKDSGKSEFLLSYGKEVNKIPQSYENLKKGSTVTSNGLNWEVIEYHA</sequence>
<gene>
    <name type="primary">HRI1</name>
    <name type="ORF">FOSTERSO_3299</name>
</gene>
<protein>
    <recommendedName>
        <fullName>Protein HRI1</fullName>
    </recommendedName>
    <alternativeName>
        <fullName>HRR25-interacting protein 1</fullName>
    </alternativeName>
</protein>
<keyword id="KW-0963">Cytoplasm</keyword>
<keyword id="KW-0539">Nucleus</keyword>
<keyword id="KW-0597">Phosphoprotein</keyword>